<accession>Q20WT9</accession>
<keyword id="KW-0028">Amino-acid biosynthesis</keyword>
<keyword id="KW-0055">Arginine biosynthesis</keyword>
<keyword id="KW-0963">Cytoplasm</keyword>
<keyword id="KW-0456">Lyase</keyword>
<gene>
    <name evidence="1" type="primary">argH</name>
    <name type="ordered locus">RPC_4875</name>
</gene>
<dbReference type="EC" id="4.3.2.1" evidence="1"/>
<dbReference type="EMBL" id="CP000301">
    <property type="protein sequence ID" value="ABD90397.1"/>
    <property type="status" value="ALT_INIT"/>
    <property type="molecule type" value="Genomic_DNA"/>
</dbReference>
<dbReference type="SMR" id="Q20WT9"/>
<dbReference type="STRING" id="316056.RPC_4875"/>
<dbReference type="KEGG" id="rpc:RPC_4875"/>
<dbReference type="eggNOG" id="COG0165">
    <property type="taxonomic scope" value="Bacteria"/>
</dbReference>
<dbReference type="HOGENOM" id="CLU_027272_2_3_5"/>
<dbReference type="OrthoDB" id="9769623at2"/>
<dbReference type="UniPathway" id="UPA00068">
    <property type="reaction ID" value="UER00114"/>
</dbReference>
<dbReference type="GO" id="GO:0005829">
    <property type="term" value="C:cytosol"/>
    <property type="evidence" value="ECO:0007669"/>
    <property type="project" value="TreeGrafter"/>
</dbReference>
<dbReference type="GO" id="GO:0004056">
    <property type="term" value="F:argininosuccinate lyase activity"/>
    <property type="evidence" value="ECO:0007669"/>
    <property type="project" value="UniProtKB-UniRule"/>
</dbReference>
<dbReference type="GO" id="GO:0042450">
    <property type="term" value="P:arginine biosynthetic process via ornithine"/>
    <property type="evidence" value="ECO:0007669"/>
    <property type="project" value="InterPro"/>
</dbReference>
<dbReference type="GO" id="GO:0006526">
    <property type="term" value="P:L-arginine biosynthetic process"/>
    <property type="evidence" value="ECO:0007669"/>
    <property type="project" value="UniProtKB-UniRule"/>
</dbReference>
<dbReference type="CDD" id="cd01359">
    <property type="entry name" value="Argininosuccinate_lyase"/>
    <property type="match status" value="1"/>
</dbReference>
<dbReference type="FunFam" id="1.10.275.10:FF:000002">
    <property type="entry name" value="Argininosuccinate lyase"/>
    <property type="match status" value="1"/>
</dbReference>
<dbReference type="FunFam" id="1.10.40.30:FF:000001">
    <property type="entry name" value="Argininosuccinate lyase"/>
    <property type="match status" value="1"/>
</dbReference>
<dbReference type="FunFam" id="1.20.200.10:FF:000015">
    <property type="entry name" value="argininosuccinate lyase isoform X2"/>
    <property type="match status" value="1"/>
</dbReference>
<dbReference type="Gene3D" id="1.10.40.30">
    <property type="entry name" value="Fumarase/aspartase (C-terminal domain)"/>
    <property type="match status" value="1"/>
</dbReference>
<dbReference type="Gene3D" id="1.20.200.10">
    <property type="entry name" value="Fumarase/aspartase (Central domain)"/>
    <property type="match status" value="1"/>
</dbReference>
<dbReference type="Gene3D" id="1.10.275.10">
    <property type="entry name" value="Fumarase/aspartase (N-terminal domain)"/>
    <property type="match status" value="1"/>
</dbReference>
<dbReference type="HAMAP" id="MF_00006">
    <property type="entry name" value="Arg_succ_lyase"/>
    <property type="match status" value="1"/>
</dbReference>
<dbReference type="InterPro" id="IPR029419">
    <property type="entry name" value="Arg_succ_lyase_C"/>
</dbReference>
<dbReference type="InterPro" id="IPR009049">
    <property type="entry name" value="Argininosuccinate_lyase"/>
</dbReference>
<dbReference type="InterPro" id="IPR024083">
    <property type="entry name" value="Fumarase/histidase_N"/>
</dbReference>
<dbReference type="InterPro" id="IPR020557">
    <property type="entry name" value="Fumarate_lyase_CS"/>
</dbReference>
<dbReference type="InterPro" id="IPR000362">
    <property type="entry name" value="Fumarate_lyase_fam"/>
</dbReference>
<dbReference type="InterPro" id="IPR022761">
    <property type="entry name" value="Fumarate_lyase_N"/>
</dbReference>
<dbReference type="InterPro" id="IPR008948">
    <property type="entry name" value="L-Aspartase-like"/>
</dbReference>
<dbReference type="NCBIfam" id="TIGR00838">
    <property type="entry name" value="argH"/>
    <property type="match status" value="1"/>
</dbReference>
<dbReference type="PANTHER" id="PTHR43814">
    <property type="entry name" value="ARGININOSUCCINATE LYASE"/>
    <property type="match status" value="1"/>
</dbReference>
<dbReference type="PANTHER" id="PTHR43814:SF1">
    <property type="entry name" value="ARGININOSUCCINATE LYASE"/>
    <property type="match status" value="1"/>
</dbReference>
<dbReference type="Pfam" id="PF14698">
    <property type="entry name" value="ASL_C2"/>
    <property type="match status" value="1"/>
</dbReference>
<dbReference type="Pfam" id="PF00206">
    <property type="entry name" value="Lyase_1"/>
    <property type="match status" value="1"/>
</dbReference>
<dbReference type="PRINTS" id="PR00145">
    <property type="entry name" value="ARGSUCLYASE"/>
</dbReference>
<dbReference type="PRINTS" id="PR00149">
    <property type="entry name" value="FUMRATELYASE"/>
</dbReference>
<dbReference type="SUPFAM" id="SSF48557">
    <property type="entry name" value="L-aspartase-like"/>
    <property type="match status" value="1"/>
</dbReference>
<dbReference type="PROSITE" id="PS00163">
    <property type="entry name" value="FUMARATE_LYASES"/>
    <property type="match status" value="1"/>
</dbReference>
<organism>
    <name type="scientific">Rhodopseudomonas palustris (strain BisB18)</name>
    <dbReference type="NCBI Taxonomy" id="316056"/>
    <lineage>
        <taxon>Bacteria</taxon>
        <taxon>Pseudomonadati</taxon>
        <taxon>Pseudomonadota</taxon>
        <taxon>Alphaproteobacteria</taxon>
        <taxon>Hyphomicrobiales</taxon>
        <taxon>Nitrobacteraceae</taxon>
        <taxon>Rhodopseudomonas</taxon>
    </lineage>
</organism>
<sequence>MSNKMWGGRFSERPDAIMEEINVSIDVDRHLYAQDIAASKAHAAMLAAQGIVTAKDAKNIAKGLDTILSEIVAGSFDFKRALEDIHMNVESRLSELIGPAAGRLHTARSRNDQVATDFRLFVRDTIDGIDAALASYQHALATRALEHADTVMPGFTHLQTAQPVTFGHHLMAYVEMAARDRGRFRDARKRLNESPLGAAALAGTSFPIDRDATAKALGFERPMANSLDAVSDRDFVLETLAAASIAAVHLSRFAEEIVLWTSPLVGMVRLSDKFTTGSSIMPQKRNPDAAELARAKTGRVIGALTGLLIVMKGLPLAYQKDMQEDKQGAMEAFAALSLAIRAMSGMVSDLVPDPARMKQAAGEGYATATDLADWLVRELKMPFRDAHHVTGRIVGEASKQGVALHELPLAEMQAIEPRITQQALSVLSVESSVKSRVSYGGTAPKNVRAQAKAWLKRLEKEHNSG</sequence>
<reference key="1">
    <citation type="submission" date="2006-03" db="EMBL/GenBank/DDBJ databases">
        <title>Complete sequence of Rhodopseudomonas palustris BisB18.</title>
        <authorList>
            <consortium name="US DOE Joint Genome Institute"/>
            <person name="Copeland A."/>
            <person name="Lucas S."/>
            <person name="Lapidus A."/>
            <person name="Barry K."/>
            <person name="Detter J.C."/>
            <person name="Glavina del Rio T."/>
            <person name="Hammon N."/>
            <person name="Israni S."/>
            <person name="Dalin E."/>
            <person name="Tice H."/>
            <person name="Pitluck S."/>
            <person name="Chain P."/>
            <person name="Malfatti S."/>
            <person name="Shin M."/>
            <person name="Vergez L."/>
            <person name="Schmutz J."/>
            <person name="Larimer F."/>
            <person name="Land M."/>
            <person name="Hauser L."/>
            <person name="Pelletier D.A."/>
            <person name="Kyrpides N."/>
            <person name="Anderson I."/>
            <person name="Oda Y."/>
            <person name="Harwood C.S."/>
            <person name="Richardson P."/>
        </authorList>
    </citation>
    <scope>NUCLEOTIDE SEQUENCE [LARGE SCALE GENOMIC DNA]</scope>
    <source>
        <strain>BisB18</strain>
    </source>
</reference>
<name>ARLY_RHOPB</name>
<comment type="catalytic activity">
    <reaction evidence="1">
        <text>2-(N(omega)-L-arginino)succinate = fumarate + L-arginine</text>
        <dbReference type="Rhea" id="RHEA:24020"/>
        <dbReference type="ChEBI" id="CHEBI:29806"/>
        <dbReference type="ChEBI" id="CHEBI:32682"/>
        <dbReference type="ChEBI" id="CHEBI:57472"/>
        <dbReference type="EC" id="4.3.2.1"/>
    </reaction>
</comment>
<comment type="pathway">
    <text evidence="1">Amino-acid biosynthesis; L-arginine biosynthesis; L-arginine from L-ornithine and carbamoyl phosphate: step 3/3.</text>
</comment>
<comment type="subcellular location">
    <subcellularLocation>
        <location evidence="1">Cytoplasm</location>
    </subcellularLocation>
</comment>
<comment type="similarity">
    <text evidence="1">Belongs to the lyase 1 family. Argininosuccinate lyase subfamily.</text>
</comment>
<comment type="sequence caution" evidence="2">
    <conflict type="erroneous initiation">
        <sequence resource="EMBL-CDS" id="ABD90397"/>
    </conflict>
</comment>
<evidence type="ECO:0000255" key="1">
    <source>
        <dbReference type="HAMAP-Rule" id="MF_00006"/>
    </source>
</evidence>
<evidence type="ECO:0000305" key="2"/>
<feature type="chain" id="PRO_0000240762" description="Argininosuccinate lyase">
    <location>
        <begin position="1"/>
        <end position="465"/>
    </location>
</feature>
<protein>
    <recommendedName>
        <fullName evidence="1">Argininosuccinate lyase</fullName>
        <shortName evidence="1">ASAL</shortName>
        <ecNumber evidence="1">4.3.2.1</ecNumber>
    </recommendedName>
    <alternativeName>
        <fullName evidence="1">Arginosuccinase</fullName>
    </alternativeName>
</protein>
<proteinExistence type="inferred from homology"/>